<proteinExistence type="inferred from homology"/>
<keyword id="KW-0165">Cleavage on pair of basic residues</keyword>
<keyword id="KW-1015">Disulfide bond</keyword>
<keyword id="KW-0325">Glycoprotein</keyword>
<keyword id="KW-0339">Growth factor</keyword>
<keyword id="KW-0964">Secreted</keyword>
<keyword id="KW-0732">Signal</keyword>
<gene>
    <name type="primary">BDNF</name>
</gene>
<protein>
    <recommendedName>
        <fullName evidence="3">Neurotrophic factor BDNF precursor form</fullName>
        <shortName>proBDNF</shortName>
    </recommendedName>
    <alternativeName>
        <fullName>Brain-derived neurotrophic factor</fullName>
    </alternativeName>
    <component>
        <recommendedName>
            <fullName>Neurotrophic factor BDNF</fullName>
        </recommendedName>
    </component>
</protein>
<dbReference type="EMBL" id="AY988041">
    <property type="protein sequence ID" value="AAY44248.1"/>
    <property type="molecule type" value="Genomic_DNA"/>
</dbReference>
<dbReference type="SMR" id="Q1X6Z7"/>
<dbReference type="GlyCosmos" id="Q1X6Z7">
    <property type="glycosylation" value="1 site, No reported glycans"/>
</dbReference>
<dbReference type="GO" id="GO:0030424">
    <property type="term" value="C:axon"/>
    <property type="evidence" value="ECO:0007669"/>
    <property type="project" value="TreeGrafter"/>
</dbReference>
<dbReference type="GO" id="GO:0030425">
    <property type="term" value="C:dendrite"/>
    <property type="evidence" value="ECO:0007669"/>
    <property type="project" value="TreeGrafter"/>
</dbReference>
<dbReference type="GO" id="GO:0005615">
    <property type="term" value="C:extracellular space"/>
    <property type="evidence" value="ECO:0007669"/>
    <property type="project" value="TreeGrafter"/>
</dbReference>
<dbReference type="GO" id="GO:0008021">
    <property type="term" value="C:synaptic vesicle"/>
    <property type="evidence" value="ECO:0007669"/>
    <property type="project" value="TreeGrafter"/>
</dbReference>
<dbReference type="GO" id="GO:0008083">
    <property type="term" value="F:growth factor activity"/>
    <property type="evidence" value="ECO:0007669"/>
    <property type="project" value="UniProtKB-KW"/>
</dbReference>
<dbReference type="GO" id="GO:0005163">
    <property type="term" value="F:nerve growth factor receptor binding"/>
    <property type="evidence" value="ECO:0007669"/>
    <property type="project" value="TreeGrafter"/>
</dbReference>
<dbReference type="GO" id="GO:0007169">
    <property type="term" value="P:cell surface receptor protein tyrosine kinase signaling pathway"/>
    <property type="evidence" value="ECO:0007669"/>
    <property type="project" value="TreeGrafter"/>
</dbReference>
<dbReference type="GO" id="GO:0050804">
    <property type="term" value="P:modulation of chemical synaptic transmission"/>
    <property type="evidence" value="ECO:0007669"/>
    <property type="project" value="TreeGrafter"/>
</dbReference>
<dbReference type="GO" id="GO:0043524">
    <property type="term" value="P:negative regulation of neuron apoptotic process"/>
    <property type="evidence" value="ECO:0007669"/>
    <property type="project" value="TreeGrafter"/>
</dbReference>
<dbReference type="GO" id="GO:0021675">
    <property type="term" value="P:nerve development"/>
    <property type="evidence" value="ECO:0007669"/>
    <property type="project" value="TreeGrafter"/>
</dbReference>
<dbReference type="GO" id="GO:0038180">
    <property type="term" value="P:nerve growth factor signaling pathway"/>
    <property type="evidence" value="ECO:0007669"/>
    <property type="project" value="TreeGrafter"/>
</dbReference>
<dbReference type="GO" id="GO:0048812">
    <property type="term" value="P:neuron projection morphogenesis"/>
    <property type="evidence" value="ECO:0007669"/>
    <property type="project" value="TreeGrafter"/>
</dbReference>
<dbReference type="FunFam" id="2.10.90.10:FF:000002">
    <property type="entry name" value="Brain-derived neurotrophic factor"/>
    <property type="match status" value="1"/>
</dbReference>
<dbReference type="Gene3D" id="2.10.90.10">
    <property type="entry name" value="Cystine-knot cytokines"/>
    <property type="match status" value="1"/>
</dbReference>
<dbReference type="InterPro" id="IPR020430">
    <property type="entry name" value="Brain-der_neurotrophic_factor"/>
</dbReference>
<dbReference type="InterPro" id="IPR029034">
    <property type="entry name" value="Cystine-knot_cytokine"/>
</dbReference>
<dbReference type="InterPro" id="IPR020408">
    <property type="entry name" value="Nerve_growth_factor-like"/>
</dbReference>
<dbReference type="InterPro" id="IPR002072">
    <property type="entry name" value="Nerve_growth_factor-rel"/>
</dbReference>
<dbReference type="InterPro" id="IPR019846">
    <property type="entry name" value="Nerve_growth_factor_CS"/>
</dbReference>
<dbReference type="PANTHER" id="PTHR11589:SF3">
    <property type="entry name" value="BRAIN-DERIVED NEUROTROPHIC FACTOR"/>
    <property type="match status" value="1"/>
</dbReference>
<dbReference type="PANTHER" id="PTHR11589">
    <property type="entry name" value="NERVE GROWTH FACTOR NGF -RELATED"/>
    <property type="match status" value="1"/>
</dbReference>
<dbReference type="Pfam" id="PF00243">
    <property type="entry name" value="NGF"/>
    <property type="match status" value="1"/>
</dbReference>
<dbReference type="PIRSF" id="PIRSF001789">
    <property type="entry name" value="NGF"/>
    <property type="match status" value="1"/>
</dbReference>
<dbReference type="PRINTS" id="PR01912">
    <property type="entry name" value="BDNFACTOR"/>
</dbReference>
<dbReference type="PRINTS" id="PR00268">
    <property type="entry name" value="NGF"/>
</dbReference>
<dbReference type="SMART" id="SM00140">
    <property type="entry name" value="NGF"/>
    <property type="match status" value="1"/>
</dbReference>
<dbReference type="SUPFAM" id="SSF57501">
    <property type="entry name" value="Cystine-knot cytokines"/>
    <property type="match status" value="1"/>
</dbReference>
<dbReference type="PROSITE" id="PS00248">
    <property type="entry name" value="NGF_1"/>
    <property type="match status" value="1"/>
</dbReference>
<dbReference type="PROSITE" id="PS50270">
    <property type="entry name" value="NGF_2"/>
    <property type="match status" value="1"/>
</dbReference>
<sequence length="223" mass="24973">SCMKAAPMKEVSIRGQGSLAYPGLRTQGNLGTLGGPNDATRGLTSLADTFEHVIEELLDEQQVIQPSKENKDADLYSSRVMLSSQVPLEPPLLFLLEEYKNYLDAANMSMRVRRHSDPARRGELSVCDSTSEWVTAAEKKTAVDMSGATVTVLEKVPVPKGQLKQYFYETKCSSKGYAKEGCRGIDKRYWNSQCRTTQSYVRALTMDNKKRVGWRFIRIDTSC</sequence>
<name>BDNF_CALRI</name>
<organism>
    <name type="scientific">Calabaria reinhardtii</name>
    <name type="common">Calabar boa</name>
    <name type="synonym">Calabar ground python</name>
    <dbReference type="NCBI Taxonomy" id="39283"/>
    <lineage>
        <taxon>Eukaryota</taxon>
        <taxon>Metazoa</taxon>
        <taxon>Chordata</taxon>
        <taxon>Craniata</taxon>
        <taxon>Vertebrata</taxon>
        <taxon>Euteleostomi</taxon>
        <taxon>Lepidosauria</taxon>
        <taxon>Squamata</taxon>
        <taxon>Bifurcata</taxon>
        <taxon>Unidentata</taxon>
        <taxon>Episquamata</taxon>
        <taxon>Toxicofera</taxon>
        <taxon>Serpentes</taxon>
        <taxon>Henophidia</taxon>
        <taxon>Boidae</taxon>
        <taxon>Erycinae</taxon>
        <taxon>Calabaria</taxon>
    </lineage>
</organism>
<accession>Q1X6Z7</accession>
<reference key="1">
    <citation type="journal article" date="2006" name="Mol. Phylogenet. Evol.">
        <title>Dispersal and vicariance: the complex evolutionary history of boid snakes.</title>
        <authorList>
            <person name="Noonan B.P."/>
            <person name="Chippindale P.T."/>
        </authorList>
    </citation>
    <scope>NUCLEOTIDE SEQUENCE [GENOMIC DNA]</scope>
</reference>
<comment type="function">
    <text evidence="1">Promotes the survival of neuronal populations that are all located either in the central nervous system or directly connected to it.</text>
</comment>
<comment type="subcellular location">
    <subcellularLocation>
        <location evidence="1">Secreted</location>
    </subcellularLocation>
</comment>
<comment type="similarity">
    <text evidence="3">Belongs to the NGF-beta family.</text>
</comment>
<feature type="signal peptide" evidence="2">
    <location>
        <begin position="1" status="less than"/>
        <end position="5"/>
    </location>
</feature>
<feature type="propeptide" id="PRO_0000346662" evidence="1">
    <location>
        <begin position="6"/>
        <end position="114"/>
    </location>
</feature>
<feature type="chain" id="PRO_0000346663" description="Neurotrophic factor BDNF">
    <location>
        <begin position="115"/>
        <end position="223" status="greater than"/>
    </location>
</feature>
<feature type="glycosylation site" description="N-linked (GlcNAc...) asparagine" evidence="2">
    <location>
        <position position="107"/>
    </location>
</feature>
<feature type="disulfide bond" evidence="1">
    <location>
        <begin position="127"/>
        <end position="194"/>
    </location>
</feature>
<feature type="disulfide bond" evidence="1">
    <location>
        <begin position="172"/>
        <end position="223"/>
    </location>
</feature>
<feature type="non-terminal residue">
    <location>
        <position position="1"/>
    </location>
</feature>
<feature type="non-terminal residue">
    <location>
        <position position="223"/>
    </location>
</feature>
<evidence type="ECO:0000250" key="1"/>
<evidence type="ECO:0000255" key="2"/>
<evidence type="ECO:0000305" key="3"/>